<accession>Q6CJ86</accession>
<dbReference type="EC" id="2.6.1.19" evidence="1"/>
<dbReference type="EMBL" id="CR382126">
    <property type="protein sequence ID" value="CAG98711.1"/>
    <property type="molecule type" value="Genomic_DNA"/>
</dbReference>
<dbReference type="RefSeq" id="XP_456003.1">
    <property type="nucleotide sequence ID" value="XM_456003.1"/>
</dbReference>
<dbReference type="SMR" id="Q6CJ86"/>
<dbReference type="FunCoup" id="Q6CJ86">
    <property type="interactions" value="328"/>
</dbReference>
<dbReference type="STRING" id="284590.Q6CJ86"/>
<dbReference type="PaxDb" id="284590-Q6CJ86"/>
<dbReference type="KEGG" id="kla:KLLA0_F20548g"/>
<dbReference type="eggNOG" id="KOG1405">
    <property type="taxonomic scope" value="Eukaryota"/>
</dbReference>
<dbReference type="HOGENOM" id="CLU_016922_12_0_1"/>
<dbReference type="InParanoid" id="Q6CJ86"/>
<dbReference type="OMA" id="ERIMTTW"/>
<dbReference type="UniPathway" id="UPA00073"/>
<dbReference type="Proteomes" id="UP000000598">
    <property type="component" value="Chromosome F"/>
</dbReference>
<dbReference type="GO" id="GO:0005739">
    <property type="term" value="C:mitochondrion"/>
    <property type="evidence" value="ECO:0007669"/>
    <property type="project" value="TreeGrafter"/>
</dbReference>
<dbReference type="GO" id="GO:0034386">
    <property type="term" value="F:4-aminobutyrate:2-oxoglutarate transaminase activity"/>
    <property type="evidence" value="ECO:0007669"/>
    <property type="project" value="UniProtKB-EC"/>
</dbReference>
<dbReference type="GO" id="GO:0030170">
    <property type="term" value="F:pyridoxal phosphate binding"/>
    <property type="evidence" value="ECO:0007669"/>
    <property type="project" value="InterPro"/>
</dbReference>
<dbReference type="GO" id="GO:0006527">
    <property type="term" value="P:arginine catabolic process"/>
    <property type="evidence" value="ECO:0007669"/>
    <property type="project" value="UniProtKB-UniPathway"/>
</dbReference>
<dbReference type="GO" id="GO:0009450">
    <property type="term" value="P:gamma-aminobutyric acid catabolic process"/>
    <property type="evidence" value="ECO:0007669"/>
    <property type="project" value="TreeGrafter"/>
</dbReference>
<dbReference type="CDD" id="cd00610">
    <property type="entry name" value="OAT_like"/>
    <property type="match status" value="1"/>
</dbReference>
<dbReference type="FunFam" id="3.40.640.10:FF:000029">
    <property type="entry name" value="4-aminobutyrate aminotransferase, mitochondrial"/>
    <property type="match status" value="1"/>
</dbReference>
<dbReference type="Gene3D" id="3.90.1150.10">
    <property type="entry name" value="Aspartate Aminotransferase, domain 1"/>
    <property type="match status" value="1"/>
</dbReference>
<dbReference type="Gene3D" id="3.40.640.10">
    <property type="entry name" value="Type I PLP-dependent aspartate aminotransferase-like (Major domain)"/>
    <property type="match status" value="1"/>
</dbReference>
<dbReference type="InterPro" id="IPR004631">
    <property type="entry name" value="4NH2But_aminotransferase_euk"/>
</dbReference>
<dbReference type="InterPro" id="IPR005814">
    <property type="entry name" value="Aminotrans_3"/>
</dbReference>
<dbReference type="InterPro" id="IPR049704">
    <property type="entry name" value="Aminotrans_3_PPA_site"/>
</dbReference>
<dbReference type="InterPro" id="IPR015424">
    <property type="entry name" value="PyrdxlP-dep_Trfase"/>
</dbReference>
<dbReference type="InterPro" id="IPR015421">
    <property type="entry name" value="PyrdxlP-dep_Trfase_major"/>
</dbReference>
<dbReference type="InterPro" id="IPR015422">
    <property type="entry name" value="PyrdxlP-dep_Trfase_small"/>
</dbReference>
<dbReference type="NCBIfam" id="TIGR00699">
    <property type="entry name" value="GABAtrns_euk"/>
    <property type="match status" value="1"/>
</dbReference>
<dbReference type="PANTHER" id="PTHR43206:SF1">
    <property type="entry name" value="4-AMINOBUTYRATE AMINOTRANSFERASE, MITOCHONDRIAL"/>
    <property type="match status" value="1"/>
</dbReference>
<dbReference type="PANTHER" id="PTHR43206">
    <property type="entry name" value="AMINOTRANSFERASE"/>
    <property type="match status" value="1"/>
</dbReference>
<dbReference type="Pfam" id="PF00202">
    <property type="entry name" value="Aminotran_3"/>
    <property type="match status" value="1"/>
</dbReference>
<dbReference type="PIRSF" id="PIRSF000521">
    <property type="entry name" value="Transaminase_4ab_Lys_Orn"/>
    <property type="match status" value="1"/>
</dbReference>
<dbReference type="SUPFAM" id="SSF53383">
    <property type="entry name" value="PLP-dependent transferases"/>
    <property type="match status" value="1"/>
</dbReference>
<dbReference type="PROSITE" id="PS00600">
    <property type="entry name" value="AA_TRANSFER_CLASS_3"/>
    <property type="match status" value="1"/>
</dbReference>
<organism evidence="7">
    <name type="scientific">Kluyveromyces lactis (strain ATCC 8585 / CBS 2359 / DSM 70799 / NBRC 1267 / NRRL Y-1140 / WM37)</name>
    <name type="common">Yeast</name>
    <name type="synonym">Candida sphaerica</name>
    <dbReference type="NCBI Taxonomy" id="284590"/>
    <lineage>
        <taxon>Eukaryota</taxon>
        <taxon>Fungi</taxon>
        <taxon>Dikarya</taxon>
        <taxon>Ascomycota</taxon>
        <taxon>Saccharomycotina</taxon>
        <taxon>Saccharomycetes</taxon>
        <taxon>Saccharomycetales</taxon>
        <taxon>Saccharomycetaceae</taxon>
        <taxon>Kluyveromyces</taxon>
    </lineage>
</organism>
<name>GABAT_KLULA</name>
<comment type="function">
    <text evidence="1 6">Required for the degradation of gamma-aminobutyric acid (GABA), which is important for utilization of GABA as nitrogen source and for oxidative stress tolerance. Deaminates GABA to succinate semialdehyde, which in turn is converted to succinate by the succinate-semialdehyde dehydrogenase UGA2 (By similarity). May be involved in an alternative, arginase-independent arginine degradation pathway via GABA (Probable).</text>
</comment>
<comment type="catalytic activity">
    <reaction evidence="1">
        <text>4-aminobutanoate + 2-oxoglutarate = succinate semialdehyde + L-glutamate</text>
        <dbReference type="Rhea" id="RHEA:23352"/>
        <dbReference type="ChEBI" id="CHEBI:16810"/>
        <dbReference type="ChEBI" id="CHEBI:29985"/>
        <dbReference type="ChEBI" id="CHEBI:57706"/>
        <dbReference type="ChEBI" id="CHEBI:59888"/>
        <dbReference type="EC" id="2.6.1.19"/>
    </reaction>
</comment>
<comment type="cofactor">
    <cofactor evidence="1">
        <name>pyridoxal 5'-phosphate</name>
        <dbReference type="ChEBI" id="CHEBI:597326"/>
    </cofactor>
</comment>
<comment type="pathway">
    <text evidence="6">Amino-acid degradation; L-arginine degradation.</text>
</comment>
<comment type="subunit">
    <text evidence="1">Homodimer and homotetramer.</text>
</comment>
<comment type="subcellular location">
    <subcellularLocation>
        <location evidence="1">Cytoplasm</location>
    </subcellularLocation>
</comment>
<comment type="miscellaneous">
    <text evidence="3">Induced 4.7-fold in an arginase-negative strain during exponential growth.</text>
</comment>
<comment type="similarity">
    <text evidence="5">Belongs to the class-III pyridoxal-phosphate-dependent aminotransferase family.</text>
</comment>
<proteinExistence type="inferred from homology"/>
<protein>
    <recommendedName>
        <fullName evidence="1">4-aminobutyrate aminotransferase</fullName>
        <ecNumber evidence="1">2.6.1.19</ecNumber>
    </recommendedName>
    <alternativeName>
        <fullName evidence="1">GABA aminotransferase</fullName>
        <shortName evidence="1">GABA-AT</shortName>
    </alternativeName>
    <alternativeName>
        <fullName evidence="1">Gamma-amino-N-butyrate transaminase</fullName>
        <shortName evidence="4">GABA transaminase</shortName>
    </alternativeName>
</protein>
<gene>
    <name type="ordered locus">KLLA0F20548g</name>
</gene>
<reference key="1">
    <citation type="journal article" date="2004" name="Nature">
        <title>Genome evolution in yeasts.</title>
        <authorList>
            <person name="Dujon B."/>
            <person name="Sherman D."/>
            <person name="Fischer G."/>
            <person name="Durrens P."/>
            <person name="Casaregola S."/>
            <person name="Lafontaine I."/>
            <person name="de Montigny J."/>
            <person name="Marck C."/>
            <person name="Neuveglise C."/>
            <person name="Talla E."/>
            <person name="Goffard N."/>
            <person name="Frangeul L."/>
            <person name="Aigle M."/>
            <person name="Anthouard V."/>
            <person name="Babour A."/>
            <person name="Barbe V."/>
            <person name="Barnay S."/>
            <person name="Blanchin S."/>
            <person name="Beckerich J.-M."/>
            <person name="Beyne E."/>
            <person name="Bleykasten C."/>
            <person name="Boisrame A."/>
            <person name="Boyer J."/>
            <person name="Cattolico L."/>
            <person name="Confanioleri F."/>
            <person name="de Daruvar A."/>
            <person name="Despons L."/>
            <person name="Fabre E."/>
            <person name="Fairhead C."/>
            <person name="Ferry-Dumazet H."/>
            <person name="Groppi A."/>
            <person name="Hantraye F."/>
            <person name="Hennequin C."/>
            <person name="Jauniaux N."/>
            <person name="Joyet P."/>
            <person name="Kachouri R."/>
            <person name="Kerrest A."/>
            <person name="Koszul R."/>
            <person name="Lemaire M."/>
            <person name="Lesur I."/>
            <person name="Ma L."/>
            <person name="Muller H."/>
            <person name="Nicaud J.-M."/>
            <person name="Nikolski M."/>
            <person name="Oztas S."/>
            <person name="Ozier-Kalogeropoulos O."/>
            <person name="Pellenz S."/>
            <person name="Potier S."/>
            <person name="Richard G.-F."/>
            <person name="Straub M.-L."/>
            <person name="Suleau A."/>
            <person name="Swennen D."/>
            <person name="Tekaia F."/>
            <person name="Wesolowski-Louvel M."/>
            <person name="Westhof E."/>
            <person name="Wirth B."/>
            <person name="Zeniou-Meyer M."/>
            <person name="Zivanovic Y."/>
            <person name="Bolotin-Fukuhara M."/>
            <person name="Thierry A."/>
            <person name="Bouchier C."/>
            <person name="Caudron B."/>
            <person name="Scarpelli C."/>
            <person name="Gaillardin C."/>
            <person name="Weissenbach J."/>
            <person name="Wincker P."/>
            <person name="Souciet J.-L."/>
        </authorList>
    </citation>
    <scope>NUCLEOTIDE SEQUENCE [LARGE SCALE GENOMIC DNA]</scope>
    <source>
        <strain>ATCC 8585 / CBS 2359 / DSM 70799 / NBRC 1267 / NRRL Y-1140 / WM37</strain>
    </source>
</reference>
<reference key="2">
    <citation type="journal article" date="2014" name="Mol. Microbiol.">
        <title>An alternative, arginase-independent pathway for arginine metabolism in Kluyveromyces lactis involves guanidinobutyrase as a key enzyme.</title>
        <authorList>
            <person name="Romagnoli G."/>
            <person name="Verhoeven M.D."/>
            <person name="Mans R."/>
            <person name="Fleury Rey Y."/>
            <person name="Bel-Rhlid R."/>
            <person name="van den Broek M."/>
            <person name="Seifar R.M."/>
            <person name="Ten Pierick A."/>
            <person name="Thompson M."/>
            <person name="Muller V."/>
            <person name="Wahl S.A."/>
            <person name="Pronk J.T."/>
            <person name="Daran J.M."/>
        </authorList>
    </citation>
    <scope>PROBABLE FUNCTION</scope>
    <scope>PATHWAY</scope>
</reference>
<feature type="chain" id="PRO_0000432234" description="4-aminobutyrate aminotransferase">
    <location>
        <begin position="1"/>
        <end position="472"/>
    </location>
</feature>
<feature type="binding site" description="in other chain" evidence="2">
    <location>
        <begin position="135"/>
        <end position="136"/>
    </location>
    <ligand>
        <name>pyridoxal 5'-phosphate</name>
        <dbReference type="ChEBI" id="CHEBI:597326"/>
        <note>ligand shared between dimeric partners</note>
    </ligand>
</feature>
<feature type="binding site" evidence="2">
    <location>
        <position position="193"/>
    </location>
    <ligand>
        <name>substrate</name>
    </ligand>
</feature>
<feature type="binding site" evidence="2">
    <location>
        <position position="352"/>
    </location>
    <ligand>
        <name>pyridoxal 5'-phosphate</name>
        <dbReference type="ChEBI" id="CHEBI:597326"/>
        <note>ligand shared between dimeric partners</note>
    </ligand>
</feature>
<feature type="modified residue" description="N6-(pyridoxal phosphate)lysine" evidence="2">
    <location>
        <position position="327"/>
    </location>
</feature>
<keyword id="KW-0032">Aminotransferase</keyword>
<keyword id="KW-0963">Cytoplasm</keyword>
<keyword id="KW-0663">Pyridoxal phosphate</keyword>
<keyword id="KW-1185">Reference proteome</keyword>
<keyword id="KW-0808">Transferase</keyword>
<evidence type="ECO:0000250" key="1">
    <source>
        <dbReference type="UniProtKB" id="P17649"/>
    </source>
</evidence>
<evidence type="ECO:0000250" key="2">
    <source>
        <dbReference type="UniProtKB" id="P80147"/>
    </source>
</evidence>
<evidence type="ECO:0000269" key="3">
    <source>
    </source>
</evidence>
<evidence type="ECO:0000303" key="4">
    <source>
    </source>
</evidence>
<evidence type="ECO:0000305" key="5"/>
<evidence type="ECO:0000305" key="6">
    <source>
    </source>
</evidence>
<evidence type="ECO:0000312" key="7">
    <source>
        <dbReference type="Proteomes" id="UP000000598"/>
    </source>
</evidence>
<sequence>MSVAAKYYPNEPTEPKVVTSEIPGPESKAKVASLGEVFDSRPAYFVADYAKSSGNYIVDVDGNKFLDVYAQISSIALGYNNPALIEAAKSDKMIRALVDRPALGNFPGADLEDILKQLLKFAPKGQNKIWSGLSGADANELAFKAAFMYYRQLQRGGHGIDFSEEENSSVMENTSPGSPQLAVLSFKKAFHGRLFASGSSTCSKPIHKLDFPAFNWPHGEYPVYKYPLSENEEENKKEDDRCLAIVEDLIKSWPTPVAALIIEPIQSEGGDNHASKYFLQSLRDLTSKYNVVYIIDEVQTGVGATGKFWCHEWADIQPPVDLVTFSKKFQSAGYWFHDDRFIPNKAYRQFNTWCGDPARMIIAGAIGQEIVDNNLVDQCARVGDYLFEKLEKLQAKYPTRLINLRGKNRGTFIAFDLETSAERDQLLKLLKSNGCNVGGCAEKSVRLRPSLTFEEKHADIFVDALEKSIGQL</sequence>